<evidence type="ECO:0000250" key="1"/>
<evidence type="ECO:0000255" key="2">
    <source>
        <dbReference type="PROSITE-ProRule" id="PRU01024"/>
    </source>
</evidence>
<protein>
    <recommendedName>
        <fullName>Uncharacterized RNA methyltransferase pc1998</fullName>
        <ecNumber>2.1.1.-</ecNumber>
    </recommendedName>
</protein>
<gene>
    <name type="ordered locus">pc1998</name>
</gene>
<name>Y1998_PARUW</name>
<reference key="1">
    <citation type="journal article" date="2004" name="Science">
        <title>Illuminating the evolutionary history of chlamydiae.</title>
        <authorList>
            <person name="Horn M."/>
            <person name="Collingro A."/>
            <person name="Schmitz-Esser S."/>
            <person name="Beier C.L."/>
            <person name="Purkhold U."/>
            <person name="Fartmann B."/>
            <person name="Brandt P."/>
            <person name="Nyakatura G.J."/>
            <person name="Droege M."/>
            <person name="Frishman D."/>
            <person name="Rattei T."/>
            <person name="Mewes H.-W."/>
            <person name="Wagner M."/>
        </authorList>
    </citation>
    <scope>NUCLEOTIDE SEQUENCE [LARGE SCALE GENOMIC DNA]</scope>
    <source>
        <strain>UWE25</strain>
    </source>
</reference>
<accession>Q6M9M7</accession>
<dbReference type="EC" id="2.1.1.-"/>
<dbReference type="EMBL" id="BX908798">
    <property type="protein sequence ID" value="CAF24722.1"/>
    <property type="molecule type" value="Genomic_DNA"/>
</dbReference>
<dbReference type="RefSeq" id="WP_011176541.1">
    <property type="nucleotide sequence ID" value="NC_005861.2"/>
</dbReference>
<dbReference type="SMR" id="Q6M9M7"/>
<dbReference type="KEGG" id="pcu:PC_RS09585"/>
<dbReference type="eggNOG" id="COG2265">
    <property type="taxonomic scope" value="Bacteria"/>
</dbReference>
<dbReference type="HOGENOM" id="CLU_014689_6_0_0"/>
<dbReference type="OrthoDB" id="20543at2"/>
<dbReference type="Proteomes" id="UP000000529">
    <property type="component" value="Chromosome"/>
</dbReference>
<dbReference type="GO" id="GO:0051539">
    <property type="term" value="F:4 iron, 4 sulfur cluster binding"/>
    <property type="evidence" value="ECO:0007669"/>
    <property type="project" value="UniProtKB-KW"/>
</dbReference>
<dbReference type="GO" id="GO:0046872">
    <property type="term" value="F:metal ion binding"/>
    <property type="evidence" value="ECO:0007669"/>
    <property type="project" value="UniProtKB-KW"/>
</dbReference>
<dbReference type="GO" id="GO:0008173">
    <property type="term" value="F:RNA methyltransferase activity"/>
    <property type="evidence" value="ECO:0007669"/>
    <property type="project" value="InterPro"/>
</dbReference>
<dbReference type="GO" id="GO:0032259">
    <property type="term" value="P:methylation"/>
    <property type="evidence" value="ECO:0007669"/>
    <property type="project" value="UniProtKB-KW"/>
</dbReference>
<dbReference type="GO" id="GO:0006396">
    <property type="term" value="P:RNA processing"/>
    <property type="evidence" value="ECO:0007669"/>
    <property type="project" value="InterPro"/>
</dbReference>
<dbReference type="Gene3D" id="2.40.50.1070">
    <property type="match status" value="1"/>
</dbReference>
<dbReference type="Gene3D" id="3.40.50.150">
    <property type="entry name" value="Vaccinia Virus protein VP39"/>
    <property type="match status" value="1"/>
</dbReference>
<dbReference type="InterPro" id="IPR030390">
    <property type="entry name" value="MeTrfase_TrmA_AS"/>
</dbReference>
<dbReference type="InterPro" id="IPR053304">
    <property type="entry name" value="RNA_M5U_MTase"/>
</dbReference>
<dbReference type="InterPro" id="IPR029063">
    <property type="entry name" value="SAM-dependent_MTases_sf"/>
</dbReference>
<dbReference type="InterPro" id="IPR010280">
    <property type="entry name" value="U5_MeTrfase_fam"/>
</dbReference>
<dbReference type="PANTHER" id="PTHR47548">
    <property type="entry name" value="BNAA06G32370D PROTEIN"/>
    <property type="match status" value="1"/>
</dbReference>
<dbReference type="PANTHER" id="PTHR47548:SF1">
    <property type="entry name" value="S-ADENOSYL-L-METHIONINE-DEPENDENT METHYLTRANSFERASES SUPERFAMILY PROTEIN"/>
    <property type="match status" value="1"/>
</dbReference>
<dbReference type="Pfam" id="PF05958">
    <property type="entry name" value="tRNA_U5-meth_tr"/>
    <property type="match status" value="1"/>
</dbReference>
<dbReference type="SUPFAM" id="SSF53335">
    <property type="entry name" value="S-adenosyl-L-methionine-dependent methyltransferases"/>
    <property type="match status" value="1"/>
</dbReference>
<dbReference type="PROSITE" id="PS51687">
    <property type="entry name" value="SAM_MT_RNA_M5U"/>
    <property type="match status" value="1"/>
</dbReference>
<dbReference type="PROSITE" id="PS01230">
    <property type="entry name" value="TRMA_1"/>
    <property type="match status" value="1"/>
</dbReference>
<feature type="chain" id="PRO_0000162008" description="Uncharacterized RNA methyltransferase pc1998">
    <location>
        <begin position="1"/>
        <end position="383"/>
    </location>
</feature>
<feature type="active site" description="Nucleophile" evidence="2">
    <location>
        <position position="341"/>
    </location>
</feature>
<feature type="binding site" evidence="1">
    <location>
        <position position="12"/>
    </location>
    <ligand>
        <name>[4Fe-4S] cluster</name>
        <dbReference type="ChEBI" id="CHEBI:49883"/>
    </ligand>
</feature>
<feature type="binding site" evidence="1">
    <location>
        <position position="18"/>
    </location>
    <ligand>
        <name>[4Fe-4S] cluster</name>
        <dbReference type="ChEBI" id="CHEBI:49883"/>
    </ligand>
</feature>
<feature type="binding site" evidence="1">
    <location>
        <position position="21"/>
    </location>
    <ligand>
        <name>[4Fe-4S] cluster</name>
        <dbReference type="ChEBI" id="CHEBI:49883"/>
    </ligand>
</feature>
<feature type="binding site" evidence="1">
    <location>
        <position position="88"/>
    </location>
    <ligand>
        <name>[4Fe-4S] cluster</name>
        <dbReference type="ChEBI" id="CHEBI:49883"/>
    </ligand>
</feature>
<feature type="binding site" evidence="2">
    <location>
        <position position="219"/>
    </location>
    <ligand>
        <name>S-adenosyl-L-methionine</name>
        <dbReference type="ChEBI" id="CHEBI:59789"/>
    </ligand>
</feature>
<feature type="binding site" evidence="2">
    <location>
        <position position="246"/>
    </location>
    <ligand>
        <name>S-adenosyl-L-methionine</name>
        <dbReference type="ChEBI" id="CHEBI:59789"/>
    </ligand>
</feature>
<feature type="binding site" evidence="2">
    <location>
        <position position="267"/>
    </location>
    <ligand>
        <name>S-adenosyl-L-methionine</name>
        <dbReference type="ChEBI" id="CHEBI:59789"/>
    </ligand>
</feature>
<feature type="binding site" evidence="2">
    <location>
        <position position="314"/>
    </location>
    <ligand>
        <name>S-adenosyl-L-methionine</name>
        <dbReference type="ChEBI" id="CHEBI:59789"/>
    </ligand>
</feature>
<organism>
    <name type="scientific">Protochlamydia amoebophila (strain UWE25)</name>
    <dbReference type="NCBI Taxonomy" id="264201"/>
    <lineage>
        <taxon>Bacteria</taxon>
        <taxon>Pseudomonadati</taxon>
        <taxon>Chlamydiota</taxon>
        <taxon>Chlamydiia</taxon>
        <taxon>Parachlamydiales</taxon>
        <taxon>Parachlamydiaceae</taxon>
        <taxon>Candidatus Protochlamydia</taxon>
    </lineage>
</organism>
<proteinExistence type="inferred from homology"/>
<comment type="similarity">
    <text evidence="2">Belongs to the class I-like SAM-binding methyltransferase superfamily. RNA M5U methyltransferase family.</text>
</comment>
<sequence length="383" mass="44079">MLFPISKQALSCPHFDSCAGCSHQLFVEPPIWREVIENFKETLNPILHQGTLTGWRCRAKLAVRGTKQNPIIGLFKKGSHEALNIPFCLVHHPRINQAVTMIQNWMERHQLNPYQEHSQAGDLRYLQFVVERASGKVQIVFVLNFKDFSSPESQIWRKLLLELAQETTNAFWHSIWVNFNPHATNTIFTDKWEKVWGEPYLWESFDGVKICFQPSNFAQANLDLFEKLLKKVKSWVREKAKVVEFFAGVGTIGLSVAAKCSWIKCEEINPHSKECFYYAKQQLSSEISQKIMFYTGSADENLNLLQGADTVIVDPPRKGLSRKFIEGLTQSSVDQLIYVSCGWDSFKKNKETLISQGWNLKKLEGYSLFPGSEHIELLTLFER</sequence>
<keyword id="KW-0004">4Fe-4S</keyword>
<keyword id="KW-0408">Iron</keyword>
<keyword id="KW-0411">Iron-sulfur</keyword>
<keyword id="KW-0479">Metal-binding</keyword>
<keyword id="KW-0489">Methyltransferase</keyword>
<keyword id="KW-1185">Reference proteome</keyword>
<keyword id="KW-0949">S-adenosyl-L-methionine</keyword>
<keyword id="KW-0808">Transferase</keyword>